<accession>Q88N74</accession>
<comment type="function">
    <text evidence="2">Cell wall formation.</text>
</comment>
<comment type="catalytic activity">
    <reaction evidence="2">
        <text>2 D-alanine + ATP = D-alanyl-D-alanine + ADP + phosphate + H(+)</text>
        <dbReference type="Rhea" id="RHEA:11224"/>
        <dbReference type="ChEBI" id="CHEBI:15378"/>
        <dbReference type="ChEBI" id="CHEBI:30616"/>
        <dbReference type="ChEBI" id="CHEBI:43474"/>
        <dbReference type="ChEBI" id="CHEBI:57416"/>
        <dbReference type="ChEBI" id="CHEBI:57822"/>
        <dbReference type="ChEBI" id="CHEBI:456216"/>
        <dbReference type="EC" id="6.3.2.4"/>
    </reaction>
</comment>
<comment type="cofactor">
    <cofactor evidence="1">
        <name>Mg(2+)</name>
        <dbReference type="ChEBI" id="CHEBI:18420"/>
    </cofactor>
    <cofactor evidence="1">
        <name>Mn(2+)</name>
        <dbReference type="ChEBI" id="CHEBI:29035"/>
    </cofactor>
    <text evidence="1">Binds 2 magnesium or manganese ions per subunit.</text>
</comment>
<comment type="pathway">
    <text evidence="2">Cell wall biogenesis; peptidoglycan biosynthesis.</text>
</comment>
<comment type="subcellular location">
    <subcellularLocation>
        <location evidence="2">Cytoplasm</location>
    </subcellularLocation>
</comment>
<comment type="similarity">
    <text evidence="2">Belongs to the D-alanine--D-alanine ligase family.</text>
</comment>
<name>DDLB_PSEPK</name>
<feature type="chain" id="PRO_0000177858" description="D-alanine--D-alanine ligase B">
    <location>
        <begin position="1"/>
        <end position="318"/>
    </location>
</feature>
<feature type="domain" description="ATP-grasp" evidence="2">
    <location>
        <begin position="116"/>
        <end position="311"/>
    </location>
</feature>
<feature type="binding site" evidence="2">
    <location>
        <begin position="142"/>
        <end position="197"/>
    </location>
    <ligand>
        <name>ATP</name>
        <dbReference type="ChEBI" id="CHEBI:30616"/>
    </ligand>
</feature>
<feature type="binding site" evidence="2">
    <location>
        <position position="265"/>
    </location>
    <ligand>
        <name>Mg(2+)</name>
        <dbReference type="ChEBI" id="CHEBI:18420"/>
        <label>1</label>
    </ligand>
</feature>
<feature type="binding site" evidence="2">
    <location>
        <position position="278"/>
    </location>
    <ligand>
        <name>Mg(2+)</name>
        <dbReference type="ChEBI" id="CHEBI:18420"/>
        <label>1</label>
    </ligand>
</feature>
<feature type="binding site" evidence="2">
    <location>
        <position position="278"/>
    </location>
    <ligand>
        <name>Mg(2+)</name>
        <dbReference type="ChEBI" id="CHEBI:18420"/>
        <label>2</label>
    </ligand>
</feature>
<feature type="binding site" evidence="2">
    <location>
        <position position="280"/>
    </location>
    <ligand>
        <name>Mg(2+)</name>
        <dbReference type="ChEBI" id="CHEBI:18420"/>
        <label>2</label>
    </ligand>
</feature>
<proteinExistence type="inferred from homology"/>
<evidence type="ECO:0000250" key="1"/>
<evidence type="ECO:0000255" key="2">
    <source>
        <dbReference type="HAMAP-Rule" id="MF_00047"/>
    </source>
</evidence>
<gene>
    <name evidence="2" type="primary">ddlB</name>
    <name type="ordered locus">PP_1339</name>
</gene>
<dbReference type="EC" id="6.3.2.4" evidence="2"/>
<dbReference type="EMBL" id="AE015451">
    <property type="protein sequence ID" value="AAN66962.1"/>
    <property type="molecule type" value="Genomic_DNA"/>
</dbReference>
<dbReference type="RefSeq" id="NP_743498.1">
    <property type="nucleotide sequence ID" value="NC_002947.4"/>
</dbReference>
<dbReference type="RefSeq" id="WP_010952456.1">
    <property type="nucleotide sequence ID" value="NZ_CP169744.1"/>
</dbReference>
<dbReference type="SMR" id="Q88N74"/>
<dbReference type="STRING" id="160488.PP_1339"/>
<dbReference type="PaxDb" id="160488-PP_1339"/>
<dbReference type="KEGG" id="ppu:PP_1339"/>
<dbReference type="PATRIC" id="fig|160488.4.peg.1418"/>
<dbReference type="eggNOG" id="COG1181">
    <property type="taxonomic scope" value="Bacteria"/>
</dbReference>
<dbReference type="HOGENOM" id="CLU_039268_1_2_6"/>
<dbReference type="OrthoDB" id="9813261at2"/>
<dbReference type="PhylomeDB" id="Q88N74"/>
<dbReference type="BioCyc" id="PPUT160488:G1G01-1426-MONOMER"/>
<dbReference type="UniPathway" id="UPA00219"/>
<dbReference type="Proteomes" id="UP000000556">
    <property type="component" value="Chromosome"/>
</dbReference>
<dbReference type="GO" id="GO:0005829">
    <property type="term" value="C:cytosol"/>
    <property type="evidence" value="ECO:0007669"/>
    <property type="project" value="TreeGrafter"/>
</dbReference>
<dbReference type="GO" id="GO:0005524">
    <property type="term" value="F:ATP binding"/>
    <property type="evidence" value="ECO:0007669"/>
    <property type="project" value="UniProtKB-KW"/>
</dbReference>
<dbReference type="GO" id="GO:0008716">
    <property type="term" value="F:D-alanine-D-alanine ligase activity"/>
    <property type="evidence" value="ECO:0007669"/>
    <property type="project" value="UniProtKB-UniRule"/>
</dbReference>
<dbReference type="GO" id="GO:0046872">
    <property type="term" value="F:metal ion binding"/>
    <property type="evidence" value="ECO:0007669"/>
    <property type="project" value="UniProtKB-KW"/>
</dbReference>
<dbReference type="GO" id="GO:0071555">
    <property type="term" value="P:cell wall organization"/>
    <property type="evidence" value="ECO:0007669"/>
    <property type="project" value="UniProtKB-KW"/>
</dbReference>
<dbReference type="GO" id="GO:0009252">
    <property type="term" value="P:peptidoglycan biosynthetic process"/>
    <property type="evidence" value="ECO:0007669"/>
    <property type="project" value="UniProtKB-UniRule"/>
</dbReference>
<dbReference type="GO" id="GO:0008360">
    <property type="term" value="P:regulation of cell shape"/>
    <property type="evidence" value="ECO:0007669"/>
    <property type="project" value="UniProtKB-KW"/>
</dbReference>
<dbReference type="FunFam" id="3.30.1490.20:FF:000007">
    <property type="entry name" value="D-alanine--D-alanine ligase"/>
    <property type="match status" value="1"/>
</dbReference>
<dbReference type="FunFam" id="3.30.470.20:FF:000008">
    <property type="entry name" value="D-alanine--D-alanine ligase"/>
    <property type="match status" value="1"/>
</dbReference>
<dbReference type="FunFam" id="3.40.50.20:FF:000013">
    <property type="entry name" value="D-alanine--D-alanine ligase"/>
    <property type="match status" value="1"/>
</dbReference>
<dbReference type="Gene3D" id="3.40.50.20">
    <property type="match status" value="1"/>
</dbReference>
<dbReference type="Gene3D" id="3.30.1490.20">
    <property type="entry name" value="ATP-grasp fold, A domain"/>
    <property type="match status" value="1"/>
</dbReference>
<dbReference type="Gene3D" id="3.30.470.20">
    <property type="entry name" value="ATP-grasp fold, B domain"/>
    <property type="match status" value="1"/>
</dbReference>
<dbReference type="HAMAP" id="MF_00047">
    <property type="entry name" value="Dala_Dala_lig"/>
    <property type="match status" value="1"/>
</dbReference>
<dbReference type="InterPro" id="IPR011761">
    <property type="entry name" value="ATP-grasp"/>
</dbReference>
<dbReference type="InterPro" id="IPR013815">
    <property type="entry name" value="ATP_grasp_subdomain_1"/>
</dbReference>
<dbReference type="InterPro" id="IPR000291">
    <property type="entry name" value="D-Ala_lig_Van_CS"/>
</dbReference>
<dbReference type="InterPro" id="IPR005905">
    <property type="entry name" value="D_ala_D_ala"/>
</dbReference>
<dbReference type="InterPro" id="IPR011095">
    <property type="entry name" value="Dala_Dala_lig_C"/>
</dbReference>
<dbReference type="InterPro" id="IPR011127">
    <property type="entry name" value="Dala_Dala_lig_N"/>
</dbReference>
<dbReference type="InterPro" id="IPR016185">
    <property type="entry name" value="PreATP-grasp_dom_sf"/>
</dbReference>
<dbReference type="NCBIfam" id="TIGR01205">
    <property type="entry name" value="D_ala_D_alaTIGR"/>
    <property type="match status" value="1"/>
</dbReference>
<dbReference type="NCBIfam" id="NF002378">
    <property type="entry name" value="PRK01372.1"/>
    <property type="match status" value="1"/>
</dbReference>
<dbReference type="PANTHER" id="PTHR23132">
    <property type="entry name" value="D-ALANINE--D-ALANINE LIGASE"/>
    <property type="match status" value="1"/>
</dbReference>
<dbReference type="PANTHER" id="PTHR23132:SF23">
    <property type="entry name" value="D-ALANINE--D-ALANINE LIGASE B"/>
    <property type="match status" value="1"/>
</dbReference>
<dbReference type="Pfam" id="PF07478">
    <property type="entry name" value="Dala_Dala_lig_C"/>
    <property type="match status" value="1"/>
</dbReference>
<dbReference type="Pfam" id="PF01820">
    <property type="entry name" value="Dala_Dala_lig_N"/>
    <property type="match status" value="2"/>
</dbReference>
<dbReference type="PIRSF" id="PIRSF039102">
    <property type="entry name" value="Ddl/VanB"/>
    <property type="match status" value="1"/>
</dbReference>
<dbReference type="SUPFAM" id="SSF56059">
    <property type="entry name" value="Glutathione synthetase ATP-binding domain-like"/>
    <property type="match status" value="1"/>
</dbReference>
<dbReference type="SUPFAM" id="SSF52440">
    <property type="entry name" value="PreATP-grasp domain"/>
    <property type="match status" value="1"/>
</dbReference>
<dbReference type="PROSITE" id="PS50975">
    <property type="entry name" value="ATP_GRASP"/>
    <property type="match status" value="1"/>
</dbReference>
<dbReference type="PROSITE" id="PS00843">
    <property type="entry name" value="DALA_DALA_LIGASE_1"/>
    <property type="match status" value="1"/>
</dbReference>
<dbReference type="PROSITE" id="PS00844">
    <property type="entry name" value="DALA_DALA_LIGASE_2"/>
    <property type="match status" value="1"/>
</dbReference>
<sequence length="318" mass="34131">MTSAYDKLHSTLDVKAFGRVAVLYGGKSAEREVSLKSGAAVIDALSTAGVDVVAIDVGDDLLARLQSEKIDRAFIILHGRGGEDGSMQGLLECLGIPYTGSGILASALAMDKLRTKQVWQSLGIPTPRHAVLASESDCLQASTELGFPLIVKPAHEGSSIGMAKVNSTQELVAAWQDAAKYDSQVLVEQWIHGPEFTIAVLRGQVLPPIALGTPHVFYDYDAKYIVNDTQYRIPCGLDSVKEQELIDLTARACDAIGIEGWGRLDVMQDEQGRFWLLEVNTAPGMTDHSLVPMAARAAGLDFQQLVLAILAESVATRG</sequence>
<organism>
    <name type="scientific">Pseudomonas putida (strain ATCC 47054 / DSM 6125 / CFBP 8728 / NCIMB 11950 / KT2440)</name>
    <dbReference type="NCBI Taxonomy" id="160488"/>
    <lineage>
        <taxon>Bacteria</taxon>
        <taxon>Pseudomonadati</taxon>
        <taxon>Pseudomonadota</taxon>
        <taxon>Gammaproteobacteria</taxon>
        <taxon>Pseudomonadales</taxon>
        <taxon>Pseudomonadaceae</taxon>
        <taxon>Pseudomonas</taxon>
    </lineage>
</organism>
<reference key="1">
    <citation type="journal article" date="2002" name="Environ. Microbiol.">
        <title>Complete genome sequence and comparative analysis of the metabolically versatile Pseudomonas putida KT2440.</title>
        <authorList>
            <person name="Nelson K.E."/>
            <person name="Weinel C."/>
            <person name="Paulsen I.T."/>
            <person name="Dodson R.J."/>
            <person name="Hilbert H."/>
            <person name="Martins dos Santos V.A.P."/>
            <person name="Fouts D.E."/>
            <person name="Gill S.R."/>
            <person name="Pop M."/>
            <person name="Holmes M."/>
            <person name="Brinkac L.M."/>
            <person name="Beanan M.J."/>
            <person name="DeBoy R.T."/>
            <person name="Daugherty S.C."/>
            <person name="Kolonay J.F."/>
            <person name="Madupu R."/>
            <person name="Nelson W.C."/>
            <person name="White O."/>
            <person name="Peterson J.D."/>
            <person name="Khouri H.M."/>
            <person name="Hance I."/>
            <person name="Chris Lee P."/>
            <person name="Holtzapple E.K."/>
            <person name="Scanlan D."/>
            <person name="Tran K."/>
            <person name="Moazzez A."/>
            <person name="Utterback T.R."/>
            <person name="Rizzo M."/>
            <person name="Lee K."/>
            <person name="Kosack D."/>
            <person name="Moestl D."/>
            <person name="Wedler H."/>
            <person name="Lauber J."/>
            <person name="Stjepandic D."/>
            <person name="Hoheisel J."/>
            <person name="Straetz M."/>
            <person name="Heim S."/>
            <person name="Kiewitz C."/>
            <person name="Eisen J.A."/>
            <person name="Timmis K.N."/>
            <person name="Duesterhoeft A."/>
            <person name="Tuemmler B."/>
            <person name="Fraser C.M."/>
        </authorList>
    </citation>
    <scope>NUCLEOTIDE SEQUENCE [LARGE SCALE GENOMIC DNA]</scope>
    <source>
        <strain>ATCC 47054 / DSM 6125 / CFBP 8728 / NCIMB 11950 / KT2440</strain>
    </source>
</reference>
<keyword id="KW-0067">ATP-binding</keyword>
<keyword id="KW-0133">Cell shape</keyword>
<keyword id="KW-0961">Cell wall biogenesis/degradation</keyword>
<keyword id="KW-0963">Cytoplasm</keyword>
<keyword id="KW-0436">Ligase</keyword>
<keyword id="KW-0460">Magnesium</keyword>
<keyword id="KW-0464">Manganese</keyword>
<keyword id="KW-0479">Metal-binding</keyword>
<keyword id="KW-0547">Nucleotide-binding</keyword>
<keyword id="KW-0573">Peptidoglycan synthesis</keyword>
<keyword id="KW-1185">Reference proteome</keyword>
<protein>
    <recommendedName>
        <fullName evidence="2">D-alanine--D-alanine ligase B</fullName>
        <ecNumber evidence="2">6.3.2.4</ecNumber>
    </recommendedName>
    <alternativeName>
        <fullName evidence="2">D-Ala-D-Ala ligase B</fullName>
    </alternativeName>
    <alternativeName>
        <fullName evidence="2">D-alanylalanine synthetase B</fullName>
    </alternativeName>
</protein>